<sequence>MLTKRRMKFQYISCLAWLAHYDIFHLVPRDKNISYADLARAAGVPEQRLKSILRMAMTSSLFREHPNGTDVGHSAVSALLASDDDAYSYATYMCSKTAPMAMSMTEAHKRWGASTRTNETAYNVAFNTDLPFFDYLAQNKARMDEFARYMRSVRSSETVALKHLISGVDWESIPAGGMLVDVGGSTGGAAIALAQAYPHIRFTVQDLPENVETGEKAAAASLPADIASRLTFQAHDFTLPQPVRAADAYLLRMILHDWPDEQAVKILRNIVTAMDETKSRLFIMDTVLPKPGSVPISVERIARARDLTMIQSFNSKERELDEWKDLITAADPRLQLIGVTQPFGSAMSILEIQLSAK</sequence>
<proteinExistence type="evidence at protein level"/>
<gene>
    <name evidence="4" type="primary">pgmB</name>
    <name type="ORF">ATEG_06203</name>
</gene>
<protein>
    <recommendedName>
        <fullName evidence="5">O-methyltransferase pgmB</fullName>
        <ecNumber evidence="3">2.1.1.-</ecNumber>
    </recommendedName>
    <alternativeName>
        <fullName evidence="5">Pigmented naphthoquinones biosynthesis cluster protein B</fullName>
    </alternativeName>
</protein>
<comment type="function">
    <text evidence="2 3 7">O-methyltransferase; part of the gene cluster that mediates the biosynthesis of pleosporalin A, ascomycone A, as well as a third cryptic naphthoquinone derived pigment, all responsible for the coloration of conidia (PubMed:28471414, PubMed:35351612). Specifically methylates position C-6 of the pgmA product 3-acetonyl-1,6,8-trihydroxy-2-naphthaldehyde to yield fusarubinaldehyde (PubMed:35351612). The pathway begins with the biosynthesis of the cyclized heptaketide 3-acetonyl-1,6,8-trihydroxy-2-naphthaldehyde by the NR-PKS pgmA. The C-6 hydroxyl group is further methylated by the O-methyltransferase pgmB to yield fusarubinaldehyde which is in turn oxidized by the cytochrome P450 monooxygenase pgmC at C-9. The C-1 hydroxyl group is then methylated spontaneously. Although pgmE, pgmD and pgmH are essential for the production of pleosporalin A, it is not the case for the 2 other final products and it remains difficult to assign a specific function to each enzyme. PgmF and pgmG seem not to be involved in pigment biosynthesis although they were regulated by the cluster-specific transcription factor pgmR (Probable) (PubMed:35351612).</text>
</comment>
<comment type="pathway">
    <text evidence="3">Pigment biosynthesis.</text>
</comment>
<comment type="pathway">
    <text evidence="3">Secondary metabolite biosynthesis.</text>
</comment>
<comment type="induction">
    <text evidence="2 3">Expression is significantly up-regulated at the end of late growth phase, in the presence of Butyrolactone I (PubMed:28471414). Expression is positively regulated by the pgm cluster-specific transcription factor pgmR (PubMed:35351612).</text>
</comment>
<comment type="disruption phenotype">
    <text evidence="3">Abolished completely the production of the naphthoquinones derived pigments and leads to the accumulation of four new compounds which lack the O-methyl group, including 6-O-demethyl-5-deoxyanhydrofusarubin and 6-O-demethyl-5-deoxyfusarubin.</text>
</comment>
<comment type="similarity">
    <text evidence="6">Belongs to the class I-like SAM-binding methyltransferase superfamily. Cation-independent O-methyltransferase family.</text>
</comment>
<reference key="1">
    <citation type="submission" date="2005-09" db="EMBL/GenBank/DDBJ databases">
        <title>Annotation of the Aspergillus terreus NIH2624 genome.</title>
        <authorList>
            <person name="Birren B.W."/>
            <person name="Lander E.S."/>
            <person name="Galagan J.E."/>
            <person name="Nusbaum C."/>
            <person name="Devon K."/>
            <person name="Henn M."/>
            <person name="Ma L.-J."/>
            <person name="Jaffe D.B."/>
            <person name="Butler J."/>
            <person name="Alvarez P."/>
            <person name="Gnerre S."/>
            <person name="Grabherr M."/>
            <person name="Kleber M."/>
            <person name="Mauceli E.W."/>
            <person name="Brockman W."/>
            <person name="Rounsley S."/>
            <person name="Young S.K."/>
            <person name="LaButti K."/>
            <person name="Pushparaj V."/>
            <person name="DeCaprio D."/>
            <person name="Crawford M."/>
            <person name="Koehrsen M."/>
            <person name="Engels R."/>
            <person name="Montgomery P."/>
            <person name="Pearson M."/>
            <person name="Howarth C."/>
            <person name="Larson L."/>
            <person name="Luoma S."/>
            <person name="White J."/>
            <person name="Alvarado L."/>
            <person name="Kodira C.D."/>
            <person name="Zeng Q."/>
            <person name="Oleary S."/>
            <person name="Yandava C."/>
            <person name="Denning D.W."/>
            <person name="Nierman W.C."/>
            <person name="Milne T."/>
            <person name="Madden K."/>
        </authorList>
    </citation>
    <scope>NUCLEOTIDE SEQUENCE [LARGE SCALE GENOMIC DNA]</scope>
    <source>
        <strain>NIH 2624 / FGSC A1156</strain>
    </source>
</reference>
<reference key="2">
    <citation type="journal article" date="2017" name="Microorganisms">
        <title>Melanisation of Aspergillus terreus-is butyrolactone I involved in the regulation of both DOPA and DHN types of pigments in submerged culture?</title>
        <authorList>
            <person name="Palonen E.K."/>
            <person name="Raina S."/>
            <person name="Brandt A."/>
            <person name="Meriluoto J."/>
            <person name="Keshavarz T."/>
            <person name="Soini J.T."/>
        </authorList>
    </citation>
    <scope>IDENTIFICATION</scope>
    <scope>FUNCTION</scope>
    <scope>INDUCTION</scope>
    <source>
        <strain>MUCL38669</strain>
    </source>
</reference>
<reference key="3">
    <citation type="journal article" date="2022" name="Fungal Genet. Biol.">
        <title>Identification of a polyketide biosynthesis gene cluster by transcriptional regulator activation in Aspergillus terreus.</title>
        <authorList>
            <person name="Tang S."/>
            <person name="Men P."/>
            <person name="Zhang W."/>
            <person name="Li H."/>
            <person name="Li Z."/>
            <person name="Huang X."/>
            <person name="Lu X."/>
        </authorList>
    </citation>
    <scope>FUNCTION</scope>
    <scope>INDUCTION</scope>
    <scope>DISRUPTION PHENOTYPE</scope>
    <scope>CATALYTIC ACTIVITY</scope>
    <scope>PATHWAY</scope>
</reference>
<evidence type="ECO:0000255" key="1">
    <source>
        <dbReference type="PROSITE-ProRule" id="PRU01020"/>
    </source>
</evidence>
<evidence type="ECO:0000269" key="2">
    <source>
    </source>
</evidence>
<evidence type="ECO:0000269" key="3">
    <source>
    </source>
</evidence>
<evidence type="ECO:0000303" key="4">
    <source>
    </source>
</evidence>
<evidence type="ECO:0000303" key="5">
    <source>
    </source>
</evidence>
<evidence type="ECO:0000305" key="6"/>
<evidence type="ECO:0000305" key="7">
    <source>
    </source>
</evidence>
<feature type="chain" id="PRO_0000456002" description="O-methyltransferase pgmB">
    <location>
        <begin position="1"/>
        <end position="357"/>
    </location>
</feature>
<feature type="active site" description="Proton acceptor" evidence="1">
    <location>
        <position position="256"/>
    </location>
</feature>
<feature type="binding site" evidence="1">
    <location>
        <position position="206"/>
    </location>
    <ligand>
        <name>S-adenosyl-L-methionine</name>
        <dbReference type="ChEBI" id="CHEBI:59789"/>
    </ligand>
</feature>
<accession>Q0CJD1</accession>
<dbReference type="EC" id="2.1.1.-" evidence="3"/>
<dbReference type="EMBL" id="CH476601">
    <property type="protein sequence ID" value="EAU33964.1"/>
    <property type="molecule type" value="Genomic_DNA"/>
</dbReference>
<dbReference type="RefSeq" id="XP_001215381.1">
    <property type="nucleotide sequence ID" value="XM_001215381.1"/>
</dbReference>
<dbReference type="SMR" id="Q0CJD1"/>
<dbReference type="STRING" id="341663.Q0CJD1"/>
<dbReference type="EnsemblFungi" id="EAU33964">
    <property type="protein sequence ID" value="EAU33964"/>
    <property type="gene ID" value="ATEG_06203"/>
</dbReference>
<dbReference type="GeneID" id="4321409"/>
<dbReference type="VEuPathDB" id="FungiDB:ATEG_06203"/>
<dbReference type="eggNOG" id="KOG3178">
    <property type="taxonomic scope" value="Eukaryota"/>
</dbReference>
<dbReference type="HOGENOM" id="CLU_005533_1_0_1"/>
<dbReference type="OMA" id="CEPEPNM"/>
<dbReference type="OrthoDB" id="1606438at2759"/>
<dbReference type="Proteomes" id="UP000007963">
    <property type="component" value="Unassembled WGS sequence"/>
</dbReference>
<dbReference type="GO" id="GO:0008171">
    <property type="term" value="F:O-methyltransferase activity"/>
    <property type="evidence" value="ECO:0007669"/>
    <property type="project" value="InterPro"/>
</dbReference>
<dbReference type="GO" id="GO:0032259">
    <property type="term" value="P:methylation"/>
    <property type="evidence" value="ECO:0007669"/>
    <property type="project" value="UniProtKB-KW"/>
</dbReference>
<dbReference type="GO" id="GO:0044550">
    <property type="term" value="P:secondary metabolite biosynthetic process"/>
    <property type="evidence" value="ECO:0007669"/>
    <property type="project" value="UniProtKB-ARBA"/>
</dbReference>
<dbReference type="Gene3D" id="3.40.50.150">
    <property type="entry name" value="Vaccinia Virus protein VP39"/>
    <property type="match status" value="1"/>
</dbReference>
<dbReference type="Gene3D" id="1.10.10.10">
    <property type="entry name" value="Winged helix-like DNA-binding domain superfamily/Winged helix DNA-binding domain"/>
    <property type="match status" value="1"/>
</dbReference>
<dbReference type="InterPro" id="IPR016461">
    <property type="entry name" value="COMT-like"/>
</dbReference>
<dbReference type="InterPro" id="IPR001077">
    <property type="entry name" value="O_MeTrfase_dom"/>
</dbReference>
<dbReference type="InterPro" id="IPR029063">
    <property type="entry name" value="SAM-dependent_MTases_sf"/>
</dbReference>
<dbReference type="InterPro" id="IPR036388">
    <property type="entry name" value="WH-like_DNA-bd_sf"/>
</dbReference>
<dbReference type="InterPro" id="IPR036390">
    <property type="entry name" value="WH_DNA-bd_sf"/>
</dbReference>
<dbReference type="PANTHER" id="PTHR43712:SF19">
    <property type="entry name" value="DUAL O-METHYLTRANSFERASE_FAD-DEPENDENT MONOOXYGENASE ELCB"/>
    <property type="match status" value="1"/>
</dbReference>
<dbReference type="PANTHER" id="PTHR43712">
    <property type="entry name" value="PUTATIVE (AFU_ORTHOLOGUE AFUA_4G14580)-RELATED"/>
    <property type="match status" value="1"/>
</dbReference>
<dbReference type="Pfam" id="PF00891">
    <property type="entry name" value="Methyltransf_2"/>
    <property type="match status" value="1"/>
</dbReference>
<dbReference type="PIRSF" id="PIRSF005739">
    <property type="entry name" value="O-mtase"/>
    <property type="match status" value="1"/>
</dbReference>
<dbReference type="SUPFAM" id="SSF53335">
    <property type="entry name" value="S-adenosyl-L-methionine-dependent methyltransferases"/>
    <property type="match status" value="1"/>
</dbReference>
<dbReference type="SUPFAM" id="SSF46785">
    <property type="entry name" value="Winged helix' DNA-binding domain"/>
    <property type="match status" value="1"/>
</dbReference>
<dbReference type="PROSITE" id="PS51683">
    <property type="entry name" value="SAM_OMT_II"/>
    <property type="match status" value="1"/>
</dbReference>
<name>PGMB_ASPTN</name>
<keyword id="KW-0489">Methyltransferase</keyword>
<keyword id="KW-1185">Reference proteome</keyword>
<keyword id="KW-0949">S-adenosyl-L-methionine</keyword>
<keyword id="KW-0808">Transferase</keyword>
<organism>
    <name type="scientific">Aspergillus terreus (strain NIH 2624 / FGSC A1156)</name>
    <dbReference type="NCBI Taxonomy" id="341663"/>
    <lineage>
        <taxon>Eukaryota</taxon>
        <taxon>Fungi</taxon>
        <taxon>Dikarya</taxon>
        <taxon>Ascomycota</taxon>
        <taxon>Pezizomycotina</taxon>
        <taxon>Eurotiomycetes</taxon>
        <taxon>Eurotiomycetidae</taxon>
        <taxon>Eurotiales</taxon>
        <taxon>Aspergillaceae</taxon>
        <taxon>Aspergillus</taxon>
        <taxon>Aspergillus subgen. Circumdati</taxon>
    </lineage>
</organism>